<feature type="chain" id="PRO_0000146475" description="Small ribosomal subunit protein uS12">
    <location>
        <begin position="1"/>
        <end position="145"/>
    </location>
</feature>
<feature type="modified residue" description="Hydroxyproline" evidence="1">
    <location>
        <position position="64"/>
    </location>
</feature>
<name>RS23_ASPFU</name>
<gene>
    <name type="primary">rps23</name>
    <name type="ORF">AFUA_1G09440</name>
</gene>
<accession>Q873W8</accession>
<accession>Q4WTF9</accession>
<reference key="1">
    <citation type="submission" date="2002-12" db="EMBL/GenBank/DDBJ databases">
        <authorList>
            <person name="Cheng C.-Y."/>
            <person name="Chang C.-H."/>
            <person name="Yeh Y.-Y."/>
            <person name="Li Y.-K."/>
        </authorList>
    </citation>
    <scope>NUCLEOTIDE SEQUENCE [MRNA]</scope>
</reference>
<reference key="2">
    <citation type="journal article" date="2005" name="Nature">
        <title>Genomic sequence of the pathogenic and allergenic filamentous fungus Aspergillus fumigatus.</title>
        <authorList>
            <person name="Nierman W.C."/>
            <person name="Pain A."/>
            <person name="Anderson M.J."/>
            <person name="Wortman J.R."/>
            <person name="Kim H.S."/>
            <person name="Arroyo J."/>
            <person name="Berriman M."/>
            <person name="Abe K."/>
            <person name="Archer D.B."/>
            <person name="Bermejo C."/>
            <person name="Bennett J.W."/>
            <person name="Bowyer P."/>
            <person name="Chen D."/>
            <person name="Collins M."/>
            <person name="Coulsen R."/>
            <person name="Davies R."/>
            <person name="Dyer P.S."/>
            <person name="Farman M.L."/>
            <person name="Fedorova N."/>
            <person name="Fedorova N.D."/>
            <person name="Feldblyum T.V."/>
            <person name="Fischer R."/>
            <person name="Fosker N."/>
            <person name="Fraser A."/>
            <person name="Garcia J.L."/>
            <person name="Garcia M.J."/>
            <person name="Goble A."/>
            <person name="Goldman G.H."/>
            <person name="Gomi K."/>
            <person name="Griffith-Jones S."/>
            <person name="Gwilliam R."/>
            <person name="Haas B.J."/>
            <person name="Haas H."/>
            <person name="Harris D.E."/>
            <person name="Horiuchi H."/>
            <person name="Huang J."/>
            <person name="Humphray S."/>
            <person name="Jimenez J."/>
            <person name="Keller N."/>
            <person name="Khouri H."/>
            <person name="Kitamoto K."/>
            <person name="Kobayashi T."/>
            <person name="Konzack S."/>
            <person name="Kulkarni R."/>
            <person name="Kumagai T."/>
            <person name="Lafton A."/>
            <person name="Latge J.-P."/>
            <person name="Li W."/>
            <person name="Lord A."/>
            <person name="Lu C."/>
            <person name="Majoros W.H."/>
            <person name="May G.S."/>
            <person name="Miller B.L."/>
            <person name="Mohamoud Y."/>
            <person name="Molina M."/>
            <person name="Monod M."/>
            <person name="Mouyna I."/>
            <person name="Mulligan S."/>
            <person name="Murphy L.D."/>
            <person name="O'Neil S."/>
            <person name="Paulsen I."/>
            <person name="Penalva M.A."/>
            <person name="Pertea M."/>
            <person name="Price C."/>
            <person name="Pritchard B.L."/>
            <person name="Quail M.A."/>
            <person name="Rabbinowitsch E."/>
            <person name="Rawlins N."/>
            <person name="Rajandream M.A."/>
            <person name="Reichard U."/>
            <person name="Renauld H."/>
            <person name="Robson G.D."/>
            <person name="Rodriguez de Cordoba S."/>
            <person name="Rodriguez-Pena J.M."/>
            <person name="Ronning C.M."/>
            <person name="Rutter S."/>
            <person name="Salzberg S.L."/>
            <person name="Sanchez M."/>
            <person name="Sanchez-Ferrero J.C."/>
            <person name="Saunders D."/>
            <person name="Seeger K."/>
            <person name="Squares R."/>
            <person name="Squares S."/>
            <person name="Takeuchi M."/>
            <person name="Tekaia F."/>
            <person name="Turner G."/>
            <person name="Vazquez de Aldana C.R."/>
            <person name="Weidman J."/>
            <person name="White O."/>
            <person name="Woodward J.R."/>
            <person name="Yu J.-H."/>
            <person name="Fraser C.M."/>
            <person name="Galagan J.E."/>
            <person name="Asai K."/>
            <person name="Machida M."/>
            <person name="Hall N."/>
            <person name="Barrell B.G."/>
            <person name="Denning D.W."/>
        </authorList>
    </citation>
    <scope>NUCLEOTIDE SEQUENCE [LARGE SCALE GENOMIC DNA]</scope>
    <source>
        <strain>ATCC MYA-4609 / CBS 101355 / FGSC A1100 / Af293</strain>
    </source>
</reference>
<comment type="similarity">
    <text evidence="2">Belongs to the universal ribosomal protein uS12 family.</text>
</comment>
<keyword id="KW-0379">Hydroxylation</keyword>
<keyword id="KW-1185">Reference proteome</keyword>
<keyword id="KW-0687">Ribonucleoprotein</keyword>
<keyword id="KW-0689">Ribosomal protein</keyword>
<protein>
    <recommendedName>
        <fullName evidence="2">Small ribosomal subunit protein uS12</fullName>
    </recommendedName>
    <alternativeName>
        <fullName>40S ribosomal protein S23</fullName>
    </alternativeName>
</protein>
<dbReference type="EMBL" id="AY190325">
    <property type="protein sequence ID" value="AAO64256.1"/>
    <property type="molecule type" value="mRNA"/>
</dbReference>
<dbReference type="EMBL" id="AAHF01000004">
    <property type="protein sequence ID" value="EAL90273.1"/>
    <property type="molecule type" value="Genomic_DNA"/>
</dbReference>
<dbReference type="RefSeq" id="XP_752311.1">
    <property type="nucleotide sequence ID" value="XM_747218.1"/>
</dbReference>
<dbReference type="SMR" id="Q873W8"/>
<dbReference type="FunCoup" id="Q873W8">
    <property type="interactions" value="808"/>
</dbReference>
<dbReference type="STRING" id="330879.Q873W8"/>
<dbReference type="EnsemblFungi" id="EAL90273">
    <property type="protein sequence ID" value="EAL90273"/>
    <property type="gene ID" value="AFUA_1G09440"/>
</dbReference>
<dbReference type="GeneID" id="3510224"/>
<dbReference type="KEGG" id="afm:AFUA_1G09440"/>
<dbReference type="VEuPathDB" id="FungiDB:Afu1g09440"/>
<dbReference type="eggNOG" id="KOG1749">
    <property type="taxonomic scope" value="Eukaryota"/>
</dbReference>
<dbReference type="HOGENOM" id="CLU_115574_0_1_1"/>
<dbReference type="InParanoid" id="Q873W8"/>
<dbReference type="OMA" id="KFRWSQR"/>
<dbReference type="OrthoDB" id="1713912at2759"/>
<dbReference type="Proteomes" id="UP000002530">
    <property type="component" value="Chromosome 1"/>
</dbReference>
<dbReference type="GO" id="GO:0022627">
    <property type="term" value="C:cytosolic small ribosomal subunit"/>
    <property type="evidence" value="ECO:0000318"/>
    <property type="project" value="GO_Central"/>
</dbReference>
<dbReference type="GO" id="GO:0005840">
    <property type="term" value="C:ribosome"/>
    <property type="evidence" value="ECO:0000318"/>
    <property type="project" value="GO_Central"/>
</dbReference>
<dbReference type="GO" id="GO:0003735">
    <property type="term" value="F:structural constituent of ribosome"/>
    <property type="evidence" value="ECO:0000318"/>
    <property type="project" value="GO_Central"/>
</dbReference>
<dbReference type="GO" id="GO:0006412">
    <property type="term" value="P:translation"/>
    <property type="evidence" value="ECO:0000318"/>
    <property type="project" value="GO_Central"/>
</dbReference>
<dbReference type="CDD" id="cd03367">
    <property type="entry name" value="Ribosomal_S23"/>
    <property type="match status" value="1"/>
</dbReference>
<dbReference type="FunFam" id="2.40.50.140:FF:000007">
    <property type="entry name" value="40S ribosomal protein S23"/>
    <property type="match status" value="1"/>
</dbReference>
<dbReference type="Gene3D" id="2.40.50.140">
    <property type="entry name" value="Nucleic acid-binding proteins"/>
    <property type="match status" value="1"/>
</dbReference>
<dbReference type="InterPro" id="IPR012340">
    <property type="entry name" value="NA-bd_OB-fold"/>
</dbReference>
<dbReference type="InterPro" id="IPR006032">
    <property type="entry name" value="Ribosomal_uS12"/>
</dbReference>
<dbReference type="InterPro" id="IPR005680">
    <property type="entry name" value="Ribosomal_uS12_euk/arc"/>
</dbReference>
<dbReference type="NCBIfam" id="NF003254">
    <property type="entry name" value="PRK04211.1"/>
    <property type="match status" value="1"/>
</dbReference>
<dbReference type="NCBIfam" id="TIGR00982">
    <property type="entry name" value="uS12_E_A"/>
    <property type="match status" value="1"/>
</dbReference>
<dbReference type="PANTHER" id="PTHR11652">
    <property type="entry name" value="30S RIBOSOMAL PROTEIN S12 FAMILY MEMBER"/>
    <property type="match status" value="1"/>
</dbReference>
<dbReference type="Pfam" id="PF00164">
    <property type="entry name" value="Ribosom_S12_S23"/>
    <property type="match status" value="1"/>
</dbReference>
<dbReference type="PIRSF" id="PIRSF002133">
    <property type="entry name" value="Ribosomal_S12/S23"/>
    <property type="match status" value="1"/>
</dbReference>
<dbReference type="SUPFAM" id="SSF50249">
    <property type="entry name" value="Nucleic acid-binding proteins"/>
    <property type="match status" value="1"/>
</dbReference>
<dbReference type="PROSITE" id="PS00055">
    <property type="entry name" value="RIBOSOMAL_S12"/>
    <property type="match status" value="1"/>
</dbReference>
<sequence length="145" mass="15901">MGKGKPRGLNAARKLSNHRREQRWADLHYKKRLLGTAFKSSPFGGASHAKGIVLEKVGVEAKQPNSAIRKCVKVQLIKNGKKVTAFVPNDGCLNFIDENDEVLLAGFGRKGKAKGDIPGVRFKVVKVSGVGLLALWKEKKEKPRS</sequence>
<evidence type="ECO:0000250" key="1"/>
<evidence type="ECO:0000305" key="2"/>
<proteinExistence type="evidence at transcript level"/>
<organism>
    <name type="scientific">Aspergillus fumigatus (strain ATCC MYA-4609 / CBS 101355 / FGSC A1100 / Af293)</name>
    <name type="common">Neosartorya fumigata</name>
    <dbReference type="NCBI Taxonomy" id="330879"/>
    <lineage>
        <taxon>Eukaryota</taxon>
        <taxon>Fungi</taxon>
        <taxon>Dikarya</taxon>
        <taxon>Ascomycota</taxon>
        <taxon>Pezizomycotina</taxon>
        <taxon>Eurotiomycetes</taxon>
        <taxon>Eurotiomycetidae</taxon>
        <taxon>Eurotiales</taxon>
        <taxon>Aspergillaceae</taxon>
        <taxon>Aspergillus</taxon>
        <taxon>Aspergillus subgen. Fumigati</taxon>
    </lineage>
</organism>